<evidence type="ECO:0000250" key="1"/>
<evidence type="ECO:0000255" key="2"/>
<evidence type="ECO:0000256" key="3">
    <source>
        <dbReference type="SAM" id="MobiDB-lite"/>
    </source>
</evidence>
<evidence type="ECO:0000305" key="4"/>
<organism>
    <name type="scientific">Mycosarcoma maydis</name>
    <name type="common">Corn smut fungus</name>
    <name type="synonym">Ustilago maydis</name>
    <dbReference type="NCBI Taxonomy" id="5270"/>
    <lineage>
        <taxon>Eukaryota</taxon>
        <taxon>Fungi</taxon>
        <taxon>Dikarya</taxon>
        <taxon>Basidiomycota</taxon>
        <taxon>Ustilaginomycotina</taxon>
        <taxon>Ustilaginomycetes</taxon>
        <taxon>Ustilaginales</taxon>
        <taxon>Ustilaginaceae</taxon>
        <taxon>Mycosarcoma</taxon>
    </lineage>
</organism>
<gene>
    <name type="primary">YSH1</name>
    <name type="ORF">UMAG_01470</name>
</gene>
<comment type="function">
    <text evidence="1">Component of the cleavage factor I (CF I) involved in pre-mRNA 3'-end processing.</text>
</comment>
<comment type="subcellular location">
    <subcellularLocation>
        <location evidence="1">Nucleus</location>
    </subcellularLocation>
</comment>
<comment type="similarity">
    <text evidence="4">Belongs to the metallo-beta-lactamase superfamily. RNA-metabolizing metallo-beta-lactamase-like family. CPSF2/YSH1 subfamily.</text>
</comment>
<reference key="1">
    <citation type="journal article" date="2006" name="Nature">
        <title>Insights from the genome of the biotrophic fungal plant pathogen Ustilago maydis.</title>
        <authorList>
            <person name="Kaemper J."/>
            <person name="Kahmann R."/>
            <person name="Boelker M."/>
            <person name="Ma L.-J."/>
            <person name="Brefort T."/>
            <person name="Saville B.J."/>
            <person name="Banuett F."/>
            <person name="Kronstad J.W."/>
            <person name="Gold S.E."/>
            <person name="Mueller O."/>
            <person name="Perlin M.H."/>
            <person name="Woesten H.A.B."/>
            <person name="de Vries R."/>
            <person name="Ruiz-Herrera J."/>
            <person name="Reynaga-Pena C.G."/>
            <person name="Snetselaar K."/>
            <person name="McCann M."/>
            <person name="Perez-Martin J."/>
            <person name="Feldbruegge M."/>
            <person name="Basse C.W."/>
            <person name="Steinberg G."/>
            <person name="Ibeas J.I."/>
            <person name="Holloman W."/>
            <person name="Guzman P."/>
            <person name="Farman M.L."/>
            <person name="Stajich J.E."/>
            <person name="Sentandreu R."/>
            <person name="Gonzalez-Prieto J.M."/>
            <person name="Kennell J.C."/>
            <person name="Molina L."/>
            <person name="Schirawski J."/>
            <person name="Mendoza-Mendoza A."/>
            <person name="Greilinger D."/>
            <person name="Muench K."/>
            <person name="Roessel N."/>
            <person name="Scherer M."/>
            <person name="Vranes M."/>
            <person name="Ladendorf O."/>
            <person name="Vincon V."/>
            <person name="Fuchs U."/>
            <person name="Sandrock B."/>
            <person name="Meng S."/>
            <person name="Ho E.C.H."/>
            <person name="Cahill M.J."/>
            <person name="Boyce K.J."/>
            <person name="Klose J."/>
            <person name="Klosterman S.J."/>
            <person name="Deelstra H.J."/>
            <person name="Ortiz-Castellanos L."/>
            <person name="Li W."/>
            <person name="Sanchez-Alonso P."/>
            <person name="Schreier P.H."/>
            <person name="Haeuser-Hahn I."/>
            <person name="Vaupel M."/>
            <person name="Koopmann E."/>
            <person name="Friedrich G."/>
            <person name="Voss H."/>
            <person name="Schlueter T."/>
            <person name="Margolis J."/>
            <person name="Platt D."/>
            <person name="Swimmer C."/>
            <person name="Gnirke A."/>
            <person name="Chen F."/>
            <person name="Vysotskaia V."/>
            <person name="Mannhaupt G."/>
            <person name="Gueldener U."/>
            <person name="Muensterkoetter M."/>
            <person name="Haase D."/>
            <person name="Oesterheld M."/>
            <person name="Mewes H.-W."/>
            <person name="Mauceli E.W."/>
            <person name="DeCaprio D."/>
            <person name="Wade C.M."/>
            <person name="Butler J."/>
            <person name="Young S.K."/>
            <person name="Jaffe D.B."/>
            <person name="Calvo S.E."/>
            <person name="Nusbaum C."/>
            <person name="Galagan J.E."/>
            <person name="Birren B.W."/>
        </authorList>
    </citation>
    <scope>NUCLEOTIDE SEQUENCE [LARGE SCALE GENOMIC DNA]</scope>
    <source>
        <strain>DSM 14603 / FGSC 9021 / UM521</strain>
    </source>
</reference>
<reference key="2">
    <citation type="submission" date="2014-09" db="EMBL/GenBank/DDBJ databases">
        <authorList>
            <person name="Gueldener U."/>
            <person name="Muensterkoetter M."/>
            <person name="Walter M.C."/>
            <person name="Mannhaupt G."/>
            <person name="Kahmann R."/>
        </authorList>
    </citation>
    <scope>GENOME REANNOTATION</scope>
    <source>
        <strain>DSM 14603 / FGSC 9021 / UM521</strain>
    </source>
</reference>
<feature type="chain" id="PRO_0000238907" description="Endoribonuclease YSH1">
    <location>
        <begin position="1"/>
        <end position="880"/>
    </location>
</feature>
<feature type="region of interest" description="Disordered" evidence="3">
    <location>
        <begin position="618"/>
        <end position="666"/>
    </location>
</feature>
<feature type="region of interest" description="Disordered" evidence="3">
    <location>
        <begin position="729"/>
        <end position="783"/>
    </location>
</feature>
<feature type="compositionally biased region" description="Basic residues" evidence="3">
    <location>
        <begin position="618"/>
        <end position="631"/>
    </location>
</feature>
<feature type="compositionally biased region" description="Acidic residues" evidence="3">
    <location>
        <begin position="639"/>
        <end position="652"/>
    </location>
</feature>
<feature type="compositionally biased region" description="Basic and acidic residues" evidence="3">
    <location>
        <begin position="730"/>
        <end position="745"/>
    </location>
</feature>
<feature type="active site" description="Proton donor" evidence="2">
    <location>
        <position position="413"/>
    </location>
</feature>
<feature type="binding site" evidence="1">
    <location>
        <position position="83"/>
    </location>
    <ligand>
        <name>Zn(2+)</name>
        <dbReference type="ChEBI" id="CHEBI:29105"/>
        <label>1</label>
    </ligand>
</feature>
<feature type="binding site" evidence="1">
    <location>
        <position position="85"/>
    </location>
    <ligand>
        <name>Zn(2+)</name>
        <dbReference type="ChEBI" id="CHEBI:29105"/>
        <label>1</label>
    </ligand>
</feature>
<feature type="binding site" evidence="1">
    <location>
        <position position="87"/>
    </location>
    <ligand>
        <name>Zn(2+)</name>
        <dbReference type="ChEBI" id="CHEBI:29105"/>
        <label>2</label>
    </ligand>
</feature>
<feature type="binding site" evidence="1">
    <location>
        <position position="88"/>
    </location>
    <ligand>
        <name>Zn(2+)</name>
        <dbReference type="ChEBI" id="CHEBI:29105"/>
        <label>2</label>
    </ligand>
</feature>
<feature type="binding site" evidence="1">
    <location>
        <position position="174"/>
    </location>
    <ligand>
        <name>Zn(2+)</name>
        <dbReference type="ChEBI" id="CHEBI:29105"/>
        <label>1</label>
    </ligand>
</feature>
<feature type="binding site" evidence="1">
    <location>
        <position position="195"/>
    </location>
    <ligand>
        <name>Zn(2+)</name>
        <dbReference type="ChEBI" id="CHEBI:29105"/>
        <label>1</label>
    </ligand>
</feature>
<feature type="binding site" evidence="1">
    <location>
        <position position="195"/>
    </location>
    <ligand>
        <name>Zn(2+)</name>
        <dbReference type="ChEBI" id="CHEBI:29105"/>
        <label>2</label>
    </ligand>
</feature>
<feature type="binding site" evidence="1">
    <location>
        <position position="435"/>
    </location>
    <ligand>
        <name>Zn(2+)</name>
        <dbReference type="ChEBI" id="CHEBI:29105"/>
        <label>2</label>
    </ligand>
</feature>
<name>YSH1_MYCMD</name>
<proteinExistence type="inferred from homology"/>
<sequence length="880" mass="97869">MAPSVVPQSAAGGAALQASADDQLTIEMLGAGQEVGRSCCVLKYRGKTIVCDTGVHPAFTGIAALPFIDELDWSTVDAILITHFHLDHAAALTYIMEKTNFRDGHGKVYMTHPTKAVYRFLMSDFVRISNAGNDDNLFDENEMLASWRQIEAVDFHQDVSIAGGLRFTSYHAGHVLGACMFLIEIAGLRILYTGDFSREEDRHLVQAEIPPVKPDVLICESTYGTQTHEPRLDKEHRFTSQIHHIIKRGGRVLLPVFVLGRAQELLLLLDEYWAAHPELHSVPIYYASALAKKCISVYQTYIHTMNDHIRTRFNRRDNPFVFKHISNLRSLEKFEDRGPCVMMASPGFMQSGVSRELLERWAPDKRNGLIVSGYSVEGTMARNILNEPDEIIGINGQKIPRRMSVDYISFSAHVDFAQNSRFIDEIKAQHIVLVHGEQNNMSKLRAALQARFTARGSDVKIHTPRNCEPLVLQFRAQRTAKAIGTIAAKPPAQGDIVDGLLISKDFAYTILDPKDLTDFTGLSTSTIVQRQRVALAVSWEMVRWHLQGMYGRLQEGVDAEEGLRTLRIMGAVDVRQSARHELLVEWVSSIANDMVADSIVALLLGIDSAPSSVKMTMHNHHHHHHHHHHHHPGDAKAEETDDDAEATTEDEEARTPTESAANLPMHPFSEAALVAESEVRAKAATDEAVHRDAYQLAKMEHMAAFLEAHFGQVEELVIPEAPISEEIEESVPKVKVETEREAEKDEAGDESMSTLQPEPDSVTDVDKPELAPPAEQATASPPISIASLFDGEARSALRVFLDEAEAVIDVENLVILASSESFRARVQHLCTLALRSFTSLSDAFYLPQQMGTSLFQGKHSQLATIPEFGEERPSKMVRSS</sequence>
<protein>
    <recommendedName>
        <fullName>Endoribonuclease YSH1</fullName>
        <ecNumber>3.1.27.-</ecNumber>
    </recommendedName>
    <alternativeName>
        <fullName>mRNA 3'-end-processing protein YSH1</fullName>
    </alternativeName>
</protein>
<accession>Q4PEJ3</accession>
<accession>A0A0D1E796</accession>
<keyword id="KW-0255">Endonuclease</keyword>
<keyword id="KW-0378">Hydrolase</keyword>
<keyword id="KW-0479">Metal-binding</keyword>
<keyword id="KW-0507">mRNA processing</keyword>
<keyword id="KW-0540">Nuclease</keyword>
<keyword id="KW-0539">Nucleus</keyword>
<keyword id="KW-1185">Reference proteome</keyword>
<keyword id="KW-0862">Zinc</keyword>
<dbReference type="EC" id="3.1.27.-"/>
<dbReference type="EMBL" id="CM003142">
    <property type="protein sequence ID" value="KIS70295.1"/>
    <property type="molecule type" value="Genomic_DNA"/>
</dbReference>
<dbReference type="RefSeq" id="XP_011387532.1">
    <property type="nucleotide sequence ID" value="XM_011389230.1"/>
</dbReference>
<dbReference type="SMR" id="Q4PEJ3"/>
<dbReference type="FunCoup" id="Q4PEJ3">
    <property type="interactions" value="633"/>
</dbReference>
<dbReference type="STRING" id="237631.Q4PEJ3"/>
<dbReference type="EnsemblFungi" id="KIS70295">
    <property type="protein sequence ID" value="KIS70295"/>
    <property type="gene ID" value="UMAG_01470"/>
</dbReference>
<dbReference type="GeneID" id="23562480"/>
<dbReference type="KEGG" id="uma:UMAG_01470"/>
<dbReference type="VEuPathDB" id="FungiDB:UMAG_01470"/>
<dbReference type="eggNOG" id="KOG1137">
    <property type="taxonomic scope" value="Eukaryota"/>
</dbReference>
<dbReference type="HOGENOM" id="CLU_009673_2_0_1"/>
<dbReference type="InParanoid" id="Q4PEJ3"/>
<dbReference type="OMA" id="CKQHITL"/>
<dbReference type="OrthoDB" id="10249535at2759"/>
<dbReference type="Proteomes" id="UP000000561">
    <property type="component" value="Chromosome 3"/>
</dbReference>
<dbReference type="GO" id="GO:0005847">
    <property type="term" value="C:mRNA cleavage and polyadenylation specificity factor complex"/>
    <property type="evidence" value="ECO:0000318"/>
    <property type="project" value="GO_Central"/>
</dbReference>
<dbReference type="GO" id="GO:0004534">
    <property type="term" value="F:5'-3' RNA exonuclease activity"/>
    <property type="evidence" value="ECO:0000318"/>
    <property type="project" value="GO_Central"/>
</dbReference>
<dbReference type="GO" id="GO:0046872">
    <property type="term" value="F:metal ion binding"/>
    <property type="evidence" value="ECO:0007669"/>
    <property type="project" value="UniProtKB-KW"/>
</dbReference>
<dbReference type="GO" id="GO:0003723">
    <property type="term" value="F:RNA binding"/>
    <property type="evidence" value="ECO:0000318"/>
    <property type="project" value="GO_Central"/>
</dbReference>
<dbReference type="GO" id="GO:0004521">
    <property type="term" value="F:RNA endonuclease activity"/>
    <property type="evidence" value="ECO:0000318"/>
    <property type="project" value="GO_Central"/>
</dbReference>
<dbReference type="GO" id="GO:0006398">
    <property type="term" value="P:mRNA 3'-end processing by stem-loop binding and cleavage"/>
    <property type="evidence" value="ECO:0000318"/>
    <property type="project" value="GO_Central"/>
</dbReference>
<dbReference type="CDD" id="cd16292">
    <property type="entry name" value="CPSF3-like_MBL-fold"/>
    <property type="match status" value="1"/>
</dbReference>
<dbReference type="FunFam" id="3.40.50.10890:FF:000001">
    <property type="entry name" value="Cleavage and polyadenylation specificity factor subunit 3"/>
    <property type="match status" value="1"/>
</dbReference>
<dbReference type="Gene3D" id="3.40.50.10890">
    <property type="match status" value="1"/>
</dbReference>
<dbReference type="Gene3D" id="3.60.15.10">
    <property type="entry name" value="Ribonuclease Z/Hydroxyacylglutathione hydrolase-like"/>
    <property type="match status" value="1"/>
</dbReference>
<dbReference type="InterPro" id="IPR022712">
    <property type="entry name" value="Beta_Casp"/>
</dbReference>
<dbReference type="InterPro" id="IPR021718">
    <property type="entry name" value="CPSF73-100_C"/>
</dbReference>
<dbReference type="InterPro" id="IPR050698">
    <property type="entry name" value="MBL"/>
</dbReference>
<dbReference type="InterPro" id="IPR001279">
    <property type="entry name" value="Metallo-B-lactamas"/>
</dbReference>
<dbReference type="InterPro" id="IPR036866">
    <property type="entry name" value="RibonucZ/Hydroxyglut_hydro"/>
</dbReference>
<dbReference type="InterPro" id="IPR011108">
    <property type="entry name" value="RMMBL"/>
</dbReference>
<dbReference type="PANTHER" id="PTHR11203">
    <property type="entry name" value="CLEAVAGE AND POLYADENYLATION SPECIFICITY FACTOR FAMILY MEMBER"/>
    <property type="match status" value="1"/>
</dbReference>
<dbReference type="PANTHER" id="PTHR11203:SF11">
    <property type="entry name" value="CLEAVAGE AND POLYADENYLATION SPECIFICITY FACTOR SUBUNIT 3"/>
    <property type="match status" value="1"/>
</dbReference>
<dbReference type="Pfam" id="PF10996">
    <property type="entry name" value="Beta-Casp"/>
    <property type="match status" value="1"/>
</dbReference>
<dbReference type="Pfam" id="PF11718">
    <property type="entry name" value="CPSF73-100_C"/>
    <property type="match status" value="1"/>
</dbReference>
<dbReference type="Pfam" id="PF00753">
    <property type="entry name" value="Lactamase_B"/>
    <property type="match status" value="1"/>
</dbReference>
<dbReference type="Pfam" id="PF07521">
    <property type="entry name" value="RMMBL"/>
    <property type="match status" value="1"/>
</dbReference>
<dbReference type="SMART" id="SM01027">
    <property type="entry name" value="Beta-Casp"/>
    <property type="match status" value="1"/>
</dbReference>
<dbReference type="SMART" id="SM01098">
    <property type="entry name" value="CPSF73-100_C"/>
    <property type="match status" value="1"/>
</dbReference>
<dbReference type="SMART" id="SM00849">
    <property type="entry name" value="Lactamase_B"/>
    <property type="match status" value="1"/>
</dbReference>
<dbReference type="SUPFAM" id="SSF56281">
    <property type="entry name" value="Metallo-hydrolase/oxidoreductase"/>
    <property type="match status" value="1"/>
</dbReference>